<evidence type="ECO:0000250" key="1">
    <source>
        <dbReference type="UniProtKB" id="O58389"/>
    </source>
</evidence>
<evidence type="ECO:0000269" key="2">
    <source>
    </source>
</evidence>
<evidence type="ECO:0000303" key="3">
    <source>
    </source>
</evidence>
<evidence type="ECO:0000305" key="4"/>
<evidence type="ECO:0000312" key="5">
    <source>
        <dbReference type="EMBL" id="ABK76018.1"/>
    </source>
</evidence>
<evidence type="ECO:0000312" key="6">
    <source>
        <dbReference type="EMBL" id="AFP39644.1"/>
    </source>
</evidence>
<sequence length="362" mass="39356">MSNQVPEKMQAVVCHGPHDYRLEEVAVPQRKPGEALIRVEAVGICASDLKCYHGAAKFWGDENRPAWAETMVIPGHEFVGRVVELDDEAAQRWGIAVGDRVVSEQIVPCWECLFCKRGQYHMCQPHDLYGFKRRTPGAMASYMVYPAEALVHKVSPDIPAQHAAFAEPLSCSLHAVERAQITFEDTVVVAGCGPIGLGMIAGAKAKSPMRVIALDMAPDKLKLAEKCGADLTINIAEQDAEKIIKDLTGGYGADVYIEGTGHTSAVPQGLNLLRKLGRYVEYGVFGSDVTVDWSIISDDKELDVLGAHLGPYCWPAAIKMIESGALPMDEICTHQFPLTEFQKGLDLVASGKESVKVSLIPA</sequence>
<comment type="function">
    <text evidence="2">Catalyzes the NAD-dependent reversible oxidation of erythritol and L-threitol. Involved in the degradation pathways of erythritol and L-threitol, that allow M.smegmatis to grow on these compounds as the sole carbon source.</text>
</comment>
<comment type="catalytic activity">
    <reaction evidence="2">
        <text>erythritol + NAD(+) = D-erythrulose + NADH + H(+)</text>
        <dbReference type="Rhea" id="RHEA:48756"/>
        <dbReference type="ChEBI" id="CHEBI:15378"/>
        <dbReference type="ChEBI" id="CHEBI:16023"/>
        <dbReference type="ChEBI" id="CHEBI:17113"/>
        <dbReference type="ChEBI" id="CHEBI:57540"/>
        <dbReference type="ChEBI" id="CHEBI:57945"/>
    </reaction>
</comment>
<comment type="catalytic activity">
    <reaction evidence="2">
        <text>L-threitol + NAD(+) = L-erythrulose + NADH + H(+)</text>
        <dbReference type="Rhea" id="RHEA:48760"/>
        <dbReference type="ChEBI" id="CHEBI:15378"/>
        <dbReference type="ChEBI" id="CHEBI:27913"/>
        <dbReference type="ChEBI" id="CHEBI:42090"/>
        <dbReference type="ChEBI" id="CHEBI:57540"/>
        <dbReference type="ChEBI" id="CHEBI:57945"/>
    </reaction>
</comment>
<comment type="cofactor">
    <cofactor evidence="1">
        <name>Zn(2+)</name>
        <dbReference type="ChEBI" id="CHEBI:29105"/>
    </cofactor>
    <text evidence="1">Binds 2 Zn(2+) ions per subunit.</text>
</comment>
<comment type="biophysicochemical properties">
    <kinetics>
        <KM evidence="2">1.64 mM for L-threitol</KM>
        <KM evidence="2">1.5 mM for erythritol</KM>
        <KM evidence="2">1.47 mM for L-arabitol</KM>
        <KM evidence="2">2.76 mM for xylitol</KM>
        <KM evidence="2">2.21 mM for ribitol</KM>
        <KM evidence="2">0.026 mM for D-erythrulose</KM>
        <KM evidence="2">0.066 mM for L-erythrulose</KM>
        <KM evidence="2">0.73 mM for D-xylulose</KM>
        <KM evidence="2">0.25 mM for L-xylulose</KM>
        <KM evidence="2">1.23 mM for ribulose</KM>
        <text evidence="2">kcat is 10.2 sec(-1) with L-threitol as substrate. kcat is 8.46 sec(-1) with erythritol as substrate. kcat is 8.73 sec(-1) with L-arabitol as substrate. kcat is 8.20 sec(-1) with xylitol as substrate. kcat is 6.56 sec(-1) with ribitol as substrate. kcat is 9.88 sec(-1) with D-erythrulose as substrate. kcat is 13.3 sec(-1) with L-erythrulose as substrate. kcat is 19.3 sec(-1) with D-xylulose as substrate. kcat is 7.75 sec(-1) with L-xylulose as substrate. kcat is 21.0 sec(-1) with ribulose as substrate.</text>
    </kinetics>
</comment>
<comment type="pathway">
    <text evidence="2">Carbohydrate metabolism; erythritol degradation.</text>
</comment>
<comment type="pathway">
    <text evidence="2">Carbohydrate metabolism; L-threitol degradation.</text>
</comment>
<comment type="induction">
    <text evidence="2">Up-regulated during growth on erythritol, D-threitol or L-threitol relative to growth on glycerol.</text>
</comment>
<comment type="disruption phenotype">
    <text evidence="2">Complete loss of the ability to grow on erythritol or on L-threitol.</text>
</comment>
<comment type="similarity">
    <text evidence="4">Belongs to the zinc-containing alcohol dehydrogenase family.</text>
</comment>
<proteinExistence type="evidence at protein level"/>
<dbReference type="EC" id="1.1.1.-" evidence="2"/>
<dbReference type="EMBL" id="CP000480">
    <property type="protein sequence ID" value="ABK76018.1"/>
    <property type="molecule type" value="Genomic_DNA"/>
</dbReference>
<dbReference type="EMBL" id="CP001663">
    <property type="protein sequence ID" value="AFP39644.1"/>
    <property type="molecule type" value="Genomic_DNA"/>
</dbReference>
<dbReference type="RefSeq" id="WP_011728938.1">
    <property type="nucleotide sequence ID" value="NZ_SIJM01000015.1"/>
</dbReference>
<dbReference type="RefSeq" id="YP_887576.1">
    <property type="nucleotide sequence ID" value="NC_008596.1"/>
</dbReference>
<dbReference type="SMR" id="A0QXD8"/>
<dbReference type="STRING" id="246196.MSMEG_3265"/>
<dbReference type="PaxDb" id="246196-MSMEI_3181"/>
<dbReference type="GeneID" id="93458034"/>
<dbReference type="KEGG" id="msb:LJ00_16230"/>
<dbReference type="KEGG" id="msg:MSMEI_3181"/>
<dbReference type="KEGG" id="msm:MSMEG_3265"/>
<dbReference type="PATRIC" id="fig|246196.19.peg.3226"/>
<dbReference type="eggNOG" id="COG1063">
    <property type="taxonomic scope" value="Bacteria"/>
</dbReference>
<dbReference type="OrthoDB" id="241504at2"/>
<dbReference type="BioCyc" id="MetaCyc:MONOMER-19889"/>
<dbReference type="UniPathway" id="UPA01066"/>
<dbReference type="UniPathway" id="UPA01067"/>
<dbReference type="Proteomes" id="UP000000757">
    <property type="component" value="Chromosome"/>
</dbReference>
<dbReference type="Proteomes" id="UP000006158">
    <property type="component" value="Chromosome"/>
</dbReference>
<dbReference type="GO" id="GO:0030246">
    <property type="term" value="F:carbohydrate binding"/>
    <property type="evidence" value="ECO:0000314"/>
    <property type="project" value="UniProtKB"/>
</dbReference>
<dbReference type="GO" id="GO:0046872">
    <property type="term" value="F:metal ion binding"/>
    <property type="evidence" value="ECO:0007669"/>
    <property type="project" value="UniProtKB-KW"/>
</dbReference>
<dbReference type="GO" id="GO:0016616">
    <property type="term" value="F:oxidoreductase activity, acting on the CH-OH group of donors, NAD or NADP as acceptor"/>
    <property type="evidence" value="ECO:0000314"/>
    <property type="project" value="UniProtKB"/>
</dbReference>
<dbReference type="GO" id="GO:0016052">
    <property type="term" value="P:carbohydrate catabolic process"/>
    <property type="evidence" value="ECO:0000315"/>
    <property type="project" value="UniProtKB"/>
</dbReference>
<dbReference type="GO" id="GO:0009758">
    <property type="term" value="P:carbohydrate utilization"/>
    <property type="evidence" value="ECO:0000315"/>
    <property type="project" value="UniProtKB"/>
</dbReference>
<dbReference type="GO" id="GO:0071322">
    <property type="term" value="P:cellular response to carbohydrate stimulus"/>
    <property type="evidence" value="ECO:0000314"/>
    <property type="project" value="UniProtKB"/>
</dbReference>
<dbReference type="Gene3D" id="3.90.180.10">
    <property type="entry name" value="Medium-chain alcohol dehydrogenases, catalytic domain"/>
    <property type="match status" value="1"/>
</dbReference>
<dbReference type="Gene3D" id="3.40.50.720">
    <property type="entry name" value="NAD(P)-binding Rossmann-like Domain"/>
    <property type="match status" value="1"/>
</dbReference>
<dbReference type="InterPro" id="IPR013149">
    <property type="entry name" value="ADH-like_C"/>
</dbReference>
<dbReference type="InterPro" id="IPR013154">
    <property type="entry name" value="ADH-like_N"/>
</dbReference>
<dbReference type="InterPro" id="IPR011032">
    <property type="entry name" value="GroES-like_sf"/>
</dbReference>
<dbReference type="InterPro" id="IPR036291">
    <property type="entry name" value="NAD(P)-bd_dom_sf"/>
</dbReference>
<dbReference type="InterPro" id="IPR020843">
    <property type="entry name" value="PKS_ER"/>
</dbReference>
<dbReference type="InterPro" id="IPR050129">
    <property type="entry name" value="Zn_alcohol_dh"/>
</dbReference>
<dbReference type="PANTHER" id="PTHR43401">
    <property type="entry name" value="L-THREONINE 3-DEHYDROGENASE"/>
    <property type="match status" value="1"/>
</dbReference>
<dbReference type="PANTHER" id="PTHR43401:SF2">
    <property type="entry name" value="L-THREONINE 3-DEHYDROGENASE"/>
    <property type="match status" value="1"/>
</dbReference>
<dbReference type="Pfam" id="PF08240">
    <property type="entry name" value="ADH_N"/>
    <property type="match status" value="1"/>
</dbReference>
<dbReference type="Pfam" id="PF00107">
    <property type="entry name" value="ADH_zinc_N"/>
    <property type="match status" value="1"/>
</dbReference>
<dbReference type="SMART" id="SM00829">
    <property type="entry name" value="PKS_ER"/>
    <property type="match status" value="1"/>
</dbReference>
<dbReference type="SUPFAM" id="SSF50129">
    <property type="entry name" value="GroES-like"/>
    <property type="match status" value="1"/>
</dbReference>
<dbReference type="SUPFAM" id="SSF51735">
    <property type="entry name" value="NAD(P)-binding Rossmann-fold domains"/>
    <property type="match status" value="1"/>
</dbReference>
<protein>
    <recommendedName>
        <fullName evidence="3">Erythritol/L-threitol dehydrogenase</fullName>
        <ecNumber evidence="2">1.1.1.-</ecNumber>
    </recommendedName>
</protein>
<accession>A0QXD8</accession>
<gene>
    <name evidence="3" type="primary">eltD</name>
    <name evidence="5" type="ordered locus">MSMEG_3265</name>
    <name evidence="6" type="ordered locus">MSMEI_3181</name>
</gene>
<name>ELTD_MYCS2</name>
<reference key="1">
    <citation type="submission" date="2006-10" db="EMBL/GenBank/DDBJ databases">
        <authorList>
            <person name="Fleischmann R.D."/>
            <person name="Dodson R.J."/>
            <person name="Haft D.H."/>
            <person name="Merkel J.S."/>
            <person name="Nelson W.C."/>
            <person name="Fraser C.M."/>
        </authorList>
    </citation>
    <scope>NUCLEOTIDE SEQUENCE [LARGE SCALE GENOMIC DNA]</scope>
    <source>
        <strain>ATCC 700084 / mc(2)155</strain>
    </source>
</reference>
<reference key="2">
    <citation type="journal article" date="2007" name="Genome Biol.">
        <title>Interrupted coding sequences in Mycobacterium smegmatis: authentic mutations or sequencing errors?</title>
        <authorList>
            <person name="Deshayes C."/>
            <person name="Perrodou E."/>
            <person name="Gallien S."/>
            <person name="Euphrasie D."/>
            <person name="Schaeffer C."/>
            <person name="Van-Dorsselaer A."/>
            <person name="Poch O."/>
            <person name="Lecompte O."/>
            <person name="Reyrat J.-M."/>
        </authorList>
    </citation>
    <scope>NUCLEOTIDE SEQUENCE [LARGE SCALE GENOMIC DNA]</scope>
    <source>
        <strain>ATCC 700084 / mc(2)155</strain>
    </source>
</reference>
<reference key="3">
    <citation type="journal article" date="2009" name="Genome Res.">
        <title>Ortho-proteogenomics: multiple proteomes investigation through orthology and a new MS-based protocol.</title>
        <authorList>
            <person name="Gallien S."/>
            <person name="Perrodou E."/>
            <person name="Carapito C."/>
            <person name="Deshayes C."/>
            <person name="Reyrat J.-M."/>
            <person name="Van Dorsselaer A."/>
            <person name="Poch O."/>
            <person name="Schaeffer C."/>
            <person name="Lecompte O."/>
        </authorList>
    </citation>
    <scope>NUCLEOTIDE SEQUENCE [LARGE SCALE GENOMIC DNA]</scope>
    <source>
        <strain>ATCC 700084 / mc(2)155</strain>
    </source>
</reference>
<reference key="4">
    <citation type="journal article" date="2015" name="J. Am. Chem. Soc.">
        <title>A general strategy for the discovery of metabolic pathways: D-threitol, L-threitol, and erythritol utilization in Mycobacterium smegmatis.</title>
        <authorList>
            <person name="Huang H."/>
            <person name="Carter M.S."/>
            <person name="Vetting M.W."/>
            <person name="Al-Obaidi N."/>
            <person name="Patskovsky Y."/>
            <person name="Almo S.C."/>
            <person name="Gerlt J.A."/>
        </authorList>
    </citation>
    <scope>FUNCTION</scope>
    <scope>CATALYTIC ACTIVITY</scope>
    <scope>SUBSTRATE SPECIFICITY</scope>
    <scope>BIOPHYSICOCHEMICAL PROPERTIES</scope>
    <scope>INDUCTION</scope>
    <scope>DISRUPTION PHENOTYPE</scope>
    <scope>PATHWAY</scope>
    <source>
        <strain>ATCC 700084 / mc(2)155</strain>
    </source>
</reference>
<keyword id="KW-0119">Carbohydrate metabolism</keyword>
<keyword id="KW-0479">Metal-binding</keyword>
<keyword id="KW-0520">NAD</keyword>
<keyword id="KW-0560">Oxidoreductase</keyword>
<keyword id="KW-1185">Reference proteome</keyword>
<keyword id="KW-0862">Zinc</keyword>
<organism>
    <name type="scientific">Mycolicibacterium smegmatis (strain ATCC 700084 / mc(2)155)</name>
    <name type="common">Mycobacterium smegmatis</name>
    <dbReference type="NCBI Taxonomy" id="246196"/>
    <lineage>
        <taxon>Bacteria</taxon>
        <taxon>Bacillati</taxon>
        <taxon>Actinomycetota</taxon>
        <taxon>Actinomycetes</taxon>
        <taxon>Mycobacteriales</taxon>
        <taxon>Mycobacteriaceae</taxon>
        <taxon>Mycolicibacterium</taxon>
    </lineage>
</organism>
<feature type="chain" id="PRO_0000435513" description="Erythritol/L-threitol dehydrogenase">
    <location>
        <begin position="1"/>
        <end position="362"/>
    </location>
</feature>
<feature type="binding site" evidence="1">
    <location>
        <position position="45"/>
    </location>
    <ligand>
        <name>Zn(2+)</name>
        <dbReference type="ChEBI" id="CHEBI:29105"/>
        <label>1</label>
        <note>catalytic</note>
    </ligand>
</feature>
<feature type="binding site" evidence="1">
    <location>
        <position position="76"/>
    </location>
    <ligand>
        <name>Zn(2+)</name>
        <dbReference type="ChEBI" id="CHEBI:29105"/>
        <label>1</label>
        <note>catalytic</note>
    </ligand>
</feature>
<feature type="binding site" evidence="1">
    <location>
        <position position="77"/>
    </location>
    <ligand>
        <name>Zn(2+)</name>
        <dbReference type="ChEBI" id="CHEBI:29105"/>
        <label>1</label>
        <note>catalytic</note>
    </ligand>
</feature>
<feature type="binding site" evidence="1">
    <location>
        <position position="109"/>
    </location>
    <ligand>
        <name>Zn(2+)</name>
        <dbReference type="ChEBI" id="CHEBI:29105"/>
        <label>2</label>
    </ligand>
</feature>
<feature type="binding site" evidence="1">
    <location>
        <position position="112"/>
    </location>
    <ligand>
        <name>Zn(2+)</name>
        <dbReference type="ChEBI" id="CHEBI:29105"/>
        <label>2</label>
    </ligand>
</feature>
<feature type="binding site" evidence="1">
    <location>
        <position position="115"/>
    </location>
    <ligand>
        <name>Zn(2+)</name>
        <dbReference type="ChEBI" id="CHEBI:29105"/>
        <label>2</label>
    </ligand>
</feature>
<feature type="binding site" evidence="1">
    <location>
        <position position="123"/>
    </location>
    <ligand>
        <name>Zn(2+)</name>
        <dbReference type="ChEBI" id="CHEBI:29105"/>
        <label>2</label>
    </ligand>
</feature>
<feature type="binding site" evidence="1">
    <location>
        <position position="195"/>
    </location>
    <ligand>
        <name>NAD(+)</name>
        <dbReference type="ChEBI" id="CHEBI:57540"/>
    </ligand>
</feature>
<feature type="binding site" evidence="1">
    <location>
        <position position="215"/>
    </location>
    <ligand>
        <name>NAD(+)</name>
        <dbReference type="ChEBI" id="CHEBI:57540"/>
    </ligand>
</feature>